<dbReference type="EC" id="1.8.1.2" evidence="1"/>
<dbReference type="EMBL" id="CP000720">
    <property type="protein sequence ID" value="ABS46094.1"/>
    <property type="molecule type" value="Genomic_DNA"/>
</dbReference>
<dbReference type="RefSeq" id="WP_012105647.1">
    <property type="nucleotide sequence ID" value="NC_009708.1"/>
</dbReference>
<dbReference type="SMR" id="A7FLZ0"/>
<dbReference type="KEGG" id="ypi:YpsIP31758_3311"/>
<dbReference type="HOGENOM" id="CLU_001570_17_7_6"/>
<dbReference type="UniPathway" id="UPA00140">
    <property type="reaction ID" value="UER00207"/>
</dbReference>
<dbReference type="Proteomes" id="UP000002412">
    <property type="component" value="Chromosome"/>
</dbReference>
<dbReference type="GO" id="GO:0005829">
    <property type="term" value="C:cytosol"/>
    <property type="evidence" value="ECO:0007669"/>
    <property type="project" value="TreeGrafter"/>
</dbReference>
<dbReference type="GO" id="GO:0050660">
    <property type="term" value="F:flavin adenine dinucleotide binding"/>
    <property type="evidence" value="ECO:0007669"/>
    <property type="project" value="InterPro"/>
</dbReference>
<dbReference type="GO" id="GO:0010181">
    <property type="term" value="F:FMN binding"/>
    <property type="evidence" value="ECO:0007669"/>
    <property type="project" value="InterPro"/>
</dbReference>
<dbReference type="GO" id="GO:0004783">
    <property type="term" value="F:sulfite reductase (NADPH) activity"/>
    <property type="evidence" value="ECO:0007669"/>
    <property type="project" value="UniProtKB-UniRule"/>
</dbReference>
<dbReference type="GO" id="GO:0019344">
    <property type="term" value="P:cysteine biosynthetic process"/>
    <property type="evidence" value="ECO:0007669"/>
    <property type="project" value="UniProtKB-KW"/>
</dbReference>
<dbReference type="GO" id="GO:0070814">
    <property type="term" value="P:hydrogen sulfide biosynthetic process"/>
    <property type="evidence" value="ECO:0007669"/>
    <property type="project" value="UniProtKB-UniRule"/>
</dbReference>
<dbReference type="GO" id="GO:0000103">
    <property type="term" value="P:sulfate assimilation"/>
    <property type="evidence" value="ECO:0007669"/>
    <property type="project" value="UniProtKB-UniRule"/>
</dbReference>
<dbReference type="CDD" id="cd06199">
    <property type="entry name" value="SiR"/>
    <property type="match status" value="1"/>
</dbReference>
<dbReference type="FunFam" id="3.40.50.80:FF:000001">
    <property type="entry name" value="NADPH--cytochrome P450 reductase 1"/>
    <property type="match status" value="1"/>
</dbReference>
<dbReference type="FunFam" id="1.20.990.10:FF:000004">
    <property type="entry name" value="Sulfite reductase [NADPH] flavoprotein alpha-component"/>
    <property type="match status" value="1"/>
</dbReference>
<dbReference type="FunFam" id="3.40.50.360:FF:000018">
    <property type="entry name" value="Sulfite reductase [NADPH] flavoprotein alpha-component"/>
    <property type="match status" value="1"/>
</dbReference>
<dbReference type="Gene3D" id="3.40.50.360">
    <property type="match status" value="1"/>
</dbReference>
<dbReference type="Gene3D" id="1.20.990.10">
    <property type="entry name" value="NADPH-cytochrome p450 Reductase, Chain A, domain 3"/>
    <property type="match status" value="1"/>
</dbReference>
<dbReference type="Gene3D" id="3.40.50.80">
    <property type="entry name" value="Nucleotide-binding domain of ferredoxin-NADP reductase (FNR) module"/>
    <property type="match status" value="1"/>
</dbReference>
<dbReference type="Gene3D" id="2.40.30.10">
    <property type="entry name" value="Translation factors"/>
    <property type="match status" value="1"/>
</dbReference>
<dbReference type="HAMAP" id="MF_01541">
    <property type="entry name" value="CysJ"/>
    <property type="match status" value="1"/>
</dbReference>
<dbReference type="InterPro" id="IPR010199">
    <property type="entry name" value="CysJ"/>
</dbReference>
<dbReference type="InterPro" id="IPR003097">
    <property type="entry name" value="CysJ-like_FAD-binding"/>
</dbReference>
<dbReference type="InterPro" id="IPR029758">
    <property type="entry name" value="CysJ_Proteobact"/>
</dbReference>
<dbReference type="InterPro" id="IPR017927">
    <property type="entry name" value="FAD-bd_FR_type"/>
</dbReference>
<dbReference type="InterPro" id="IPR001094">
    <property type="entry name" value="Flavdoxin-like"/>
</dbReference>
<dbReference type="InterPro" id="IPR008254">
    <property type="entry name" value="Flavodoxin/NO_synth"/>
</dbReference>
<dbReference type="InterPro" id="IPR001709">
    <property type="entry name" value="Flavoprot_Pyr_Nucl_cyt_Rdtase"/>
</dbReference>
<dbReference type="InterPro" id="IPR029039">
    <property type="entry name" value="Flavoprotein-like_sf"/>
</dbReference>
<dbReference type="InterPro" id="IPR039261">
    <property type="entry name" value="FNR_nucleotide-bd"/>
</dbReference>
<dbReference type="InterPro" id="IPR023173">
    <property type="entry name" value="NADPH_Cyt_P450_Rdtase_alpha"/>
</dbReference>
<dbReference type="InterPro" id="IPR001433">
    <property type="entry name" value="OxRdtase_FAD/NAD-bd"/>
</dbReference>
<dbReference type="InterPro" id="IPR017938">
    <property type="entry name" value="Riboflavin_synthase-like_b-brl"/>
</dbReference>
<dbReference type="NCBIfam" id="TIGR01931">
    <property type="entry name" value="cysJ"/>
    <property type="match status" value="1"/>
</dbReference>
<dbReference type="NCBIfam" id="NF008197">
    <property type="entry name" value="PRK10953.1"/>
    <property type="match status" value="1"/>
</dbReference>
<dbReference type="PANTHER" id="PTHR19384:SF128">
    <property type="entry name" value="NADPH OXIDOREDUCTASE A"/>
    <property type="match status" value="1"/>
</dbReference>
<dbReference type="PANTHER" id="PTHR19384">
    <property type="entry name" value="NITRIC OXIDE SYNTHASE-RELATED"/>
    <property type="match status" value="1"/>
</dbReference>
<dbReference type="Pfam" id="PF00667">
    <property type="entry name" value="FAD_binding_1"/>
    <property type="match status" value="1"/>
</dbReference>
<dbReference type="Pfam" id="PF00258">
    <property type="entry name" value="Flavodoxin_1"/>
    <property type="match status" value="1"/>
</dbReference>
<dbReference type="Pfam" id="PF00175">
    <property type="entry name" value="NAD_binding_1"/>
    <property type="match status" value="1"/>
</dbReference>
<dbReference type="PIRSF" id="PIRSF000207">
    <property type="entry name" value="SiR-FP_CysJ"/>
    <property type="match status" value="1"/>
</dbReference>
<dbReference type="PRINTS" id="PR00369">
    <property type="entry name" value="FLAVODOXIN"/>
</dbReference>
<dbReference type="PRINTS" id="PR00371">
    <property type="entry name" value="FPNCR"/>
</dbReference>
<dbReference type="SUPFAM" id="SSF52343">
    <property type="entry name" value="Ferredoxin reductase-like, C-terminal NADP-linked domain"/>
    <property type="match status" value="1"/>
</dbReference>
<dbReference type="SUPFAM" id="SSF52218">
    <property type="entry name" value="Flavoproteins"/>
    <property type="match status" value="1"/>
</dbReference>
<dbReference type="SUPFAM" id="SSF63380">
    <property type="entry name" value="Riboflavin synthase domain-like"/>
    <property type="match status" value="1"/>
</dbReference>
<dbReference type="PROSITE" id="PS51384">
    <property type="entry name" value="FAD_FR"/>
    <property type="match status" value="1"/>
</dbReference>
<dbReference type="PROSITE" id="PS50902">
    <property type="entry name" value="FLAVODOXIN_LIKE"/>
    <property type="match status" value="1"/>
</dbReference>
<proteinExistence type="inferred from homology"/>
<comment type="function">
    <text evidence="1">Component of the sulfite reductase complex that catalyzes the 6-electron reduction of sulfite to sulfide. This is one of several activities required for the biosynthesis of L-cysteine from sulfate. The flavoprotein component catalyzes the electron flow from NADPH -&gt; FAD -&gt; FMN to the hemoprotein component.</text>
</comment>
<comment type="catalytic activity">
    <reaction evidence="1">
        <text>hydrogen sulfide + 3 NADP(+) + 3 H2O = sulfite + 3 NADPH + 4 H(+)</text>
        <dbReference type="Rhea" id="RHEA:13801"/>
        <dbReference type="ChEBI" id="CHEBI:15377"/>
        <dbReference type="ChEBI" id="CHEBI:15378"/>
        <dbReference type="ChEBI" id="CHEBI:17359"/>
        <dbReference type="ChEBI" id="CHEBI:29919"/>
        <dbReference type="ChEBI" id="CHEBI:57783"/>
        <dbReference type="ChEBI" id="CHEBI:58349"/>
        <dbReference type="EC" id="1.8.1.2"/>
    </reaction>
</comment>
<comment type="cofactor">
    <cofactor evidence="1">
        <name>FAD</name>
        <dbReference type="ChEBI" id="CHEBI:57692"/>
    </cofactor>
    <text evidence="1">Binds 1 FAD per subunit.</text>
</comment>
<comment type="cofactor">
    <cofactor evidence="1">
        <name>FMN</name>
        <dbReference type="ChEBI" id="CHEBI:58210"/>
    </cofactor>
    <text evidence="1">Binds 1 FMN per subunit.</text>
</comment>
<comment type="pathway">
    <text evidence="1">Sulfur metabolism; hydrogen sulfide biosynthesis; hydrogen sulfide from sulfite (NADPH route): step 1/1.</text>
</comment>
<comment type="subunit">
    <text evidence="1">Alpha(8)-beta(8). The alpha component is a flavoprotein, the beta component is a hemoprotein.</text>
</comment>
<comment type="similarity">
    <text evidence="1">Belongs to the NADPH-dependent sulphite reductase flavoprotein subunit CysJ family.</text>
</comment>
<comment type="similarity">
    <text evidence="1">In the N-terminal section; belongs to the flavodoxin family.</text>
</comment>
<comment type="similarity">
    <text evidence="1">In the C-terminal section; belongs to the flavoprotein pyridine nucleotide cytochrome reductase family.</text>
</comment>
<gene>
    <name evidence="1" type="primary">cysJ</name>
    <name type="ordered locus">YpsIP31758_3311</name>
</gene>
<evidence type="ECO:0000255" key="1">
    <source>
        <dbReference type="HAMAP-Rule" id="MF_01541"/>
    </source>
</evidence>
<organism>
    <name type="scientific">Yersinia pseudotuberculosis serotype O:1b (strain IP 31758)</name>
    <dbReference type="NCBI Taxonomy" id="349747"/>
    <lineage>
        <taxon>Bacteria</taxon>
        <taxon>Pseudomonadati</taxon>
        <taxon>Pseudomonadota</taxon>
        <taxon>Gammaproteobacteria</taxon>
        <taxon>Enterobacterales</taxon>
        <taxon>Yersiniaceae</taxon>
        <taxon>Yersinia</taxon>
    </lineage>
</organism>
<accession>A7FLZ0</accession>
<sequence>MTTQAPPTSLLPLSPEQLARLQAAVGEFSPTQMAWLSGYFWGRVNQQPGAVASPAVAAPPPVTVTLISASQTGNARRLAEQLRDDLLAAQLSVNLVNAGDYKFKQIAQERLLVVVASTQGEGEPAEEAVALHKFLFSKKAPKLPETAFAVFGLGDTSYEHFCQAGKDFDSKLAELGAQRLLDRVDADVEYQVQAQQWRQQVVATLQAKVPAQSTAPTQFIAPTQSTTPAAAAITSGGTTTVSPYSKTAPLTAQLSVQQKVTGRNSEKDVRHIEIDLGDSGLRYQPGDALGVWFDNDPALVEELLALLWLKGDEPVSIDGQNMPLAQALLSHLELTQNTTLIVDKYAALSRDETLIALLADKPALQLYAKNTPFVDMVRQAPSDLNADQLVGLLRPLTPRLYSIASSQAETENEVHITVGVVRYDIDGRARSGGASGYLADRLEVDGDIRVFIEHNDNFRLPANPETPVIMIGPGTGIAPFRAFMQQREVDGASGKNWLFFGNPHFTEDFLYQVEWQRYVKEGVLTRIDLAWSRDQAHKIYVQDKLREQGAELWNWIQQGAHIYVCGDANRMAKDVEQVLLDVVALHGAMDAEQADEYLSELRQARRYQRDVY</sequence>
<reference key="1">
    <citation type="journal article" date="2007" name="PLoS Genet.">
        <title>The complete genome sequence of Yersinia pseudotuberculosis IP31758, the causative agent of Far East scarlet-like fever.</title>
        <authorList>
            <person name="Eppinger M."/>
            <person name="Rosovitz M.J."/>
            <person name="Fricke W.F."/>
            <person name="Rasko D.A."/>
            <person name="Kokorina G."/>
            <person name="Fayolle C."/>
            <person name="Lindler L.E."/>
            <person name="Carniel E."/>
            <person name="Ravel J."/>
        </authorList>
    </citation>
    <scope>NUCLEOTIDE SEQUENCE [LARGE SCALE GENOMIC DNA]</scope>
    <source>
        <strain>IP 31758</strain>
    </source>
</reference>
<keyword id="KW-0028">Amino-acid biosynthesis</keyword>
<keyword id="KW-0198">Cysteine biosynthesis</keyword>
<keyword id="KW-0249">Electron transport</keyword>
<keyword id="KW-0274">FAD</keyword>
<keyword id="KW-0285">Flavoprotein</keyword>
<keyword id="KW-0288">FMN</keyword>
<keyword id="KW-0521">NADP</keyword>
<keyword id="KW-0560">Oxidoreductase</keyword>
<keyword id="KW-0813">Transport</keyword>
<feature type="chain" id="PRO_1000087643" description="Sulfite reductase [NADPH] flavoprotein alpha-component">
    <location>
        <begin position="1"/>
        <end position="612"/>
    </location>
</feature>
<feature type="domain" description="Flavodoxin-like" evidence="1">
    <location>
        <begin position="64"/>
        <end position="202"/>
    </location>
</feature>
<feature type="domain" description="FAD-binding FR-type" evidence="1">
    <location>
        <begin position="247"/>
        <end position="461"/>
    </location>
</feature>
<feature type="binding site" evidence="1">
    <location>
        <begin position="70"/>
        <end position="75"/>
    </location>
    <ligand>
        <name>FMN</name>
        <dbReference type="ChEBI" id="CHEBI:58210"/>
    </ligand>
</feature>
<feature type="binding site" evidence="1">
    <location>
        <begin position="117"/>
        <end position="120"/>
    </location>
    <ligand>
        <name>FMN</name>
        <dbReference type="ChEBI" id="CHEBI:58210"/>
    </ligand>
</feature>
<feature type="binding site" evidence="1">
    <location>
        <begin position="153"/>
        <end position="162"/>
    </location>
    <ligand>
        <name>FMN</name>
        <dbReference type="ChEBI" id="CHEBI:58210"/>
    </ligand>
</feature>
<feature type="binding site" evidence="1">
    <location>
        <position position="335"/>
    </location>
    <ligand>
        <name>FAD</name>
        <dbReference type="ChEBI" id="CHEBI:57692"/>
    </ligand>
</feature>
<feature type="binding site" evidence="1">
    <location>
        <position position="369"/>
    </location>
    <ligand>
        <name>FAD</name>
        <dbReference type="ChEBI" id="CHEBI:57692"/>
    </ligand>
</feature>
<feature type="binding site" evidence="1">
    <location>
        <begin position="399"/>
        <end position="402"/>
    </location>
    <ligand>
        <name>FAD</name>
        <dbReference type="ChEBI" id="CHEBI:57692"/>
    </ligand>
</feature>
<feature type="binding site" evidence="1">
    <location>
        <begin position="417"/>
        <end position="419"/>
    </location>
    <ligand>
        <name>FAD</name>
        <dbReference type="ChEBI" id="CHEBI:57692"/>
    </ligand>
</feature>
<feature type="binding site" evidence="1">
    <location>
        <position position="423"/>
    </location>
    <ligand>
        <name>FAD</name>
        <dbReference type="ChEBI" id="CHEBI:57692"/>
    </ligand>
</feature>
<feature type="binding site" evidence="1">
    <location>
        <begin position="432"/>
        <end position="435"/>
    </location>
    <ligand>
        <name>FAD</name>
        <dbReference type="ChEBI" id="CHEBI:57692"/>
    </ligand>
</feature>
<feature type="binding site" evidence="1">
    <location>
        <begin position="532"/>
        <end position="533"/>
    </location>
    <ligand>
        <name>NADP(+)</name>
        <dbReference type="ChEBI" id="CHEBI:58349"/>
    </ligand>
</feature>
<feature type="binding site" evidence="1">
    <location>
        <begin position="538"/>
        <end position="542"/>
    </location>
    <ligand>
        <name>NADP(+)</name>
        <dbReference type="ChEBI" id="CHEBI:58349"/>
    </ligand>
</feature>
<feature type="binding site" evidence="1">
    <location>
        <position position="574"/>
    </location>
    <ligand>
        <name>NADP(+)</name>
        <dbReference type="ChEBI" id="CHEBI:58349"/>
    </ligand>
</feature>
<feature type="binding site" evidence="1">
    <location>
        <position position="612"/>
    </location>
    <ligand>
        <name>FAD</name>
        <dbReference type="ChEBI" id="CHEBI:57692"/>
    </ligand>
</feature>
<name>CYSJ_YERP3</name>
<protein>
    <recommendedName>
        <fullName evidence="1">Sulfite reductase [NADPH] flavoprotein alpha-component</fullName>
        <shortName evidence="1">SiR-FP</shortName>
        <ecNumber evidence="1">1.8.1.2</ecNumber>
    </recommendedName>
</protein>